<sequence length="131" mass="15182">MVQSSEKIEVKYGEREIAEGTLITFPNPRPGRNYDIQITLPEYTCKCPFSGYPDFATIYLSYVPDQKVMELKAIKLYINSYRDRYISHEEAINQILDDLVAACEPLQMKVKGDFHPRGNVHTVVEVMYKKE</sequence>
<reference key="1">
    <citation type="journal article" date="2007" name="DNA Res.">
        <title>Complete genomic structure of the bloom-forming toxic cyanobacterium Microcystis aeruginosa NIES-843.</title>
        <authorList>
            <person name="Kaneko T."/>
            <person name="Nakajima N."/>
            <person name="Okamoto S."/>
            <person name="Suzuki I."/>
            <person name="Tanabe Y."/>
            <person name="Tamaoki M."/>
            <person name="Nakamura Y."/>
            <person name="Kasai F."/>
            <person name="Watanabe A."/>
            <person name="Kawashima K."/>
            <person name="Kishida Y."/>
            <person name="Ono A."/>
            <person name="Shimizu Y."/>
            <person name="Takahashi C."/>
            <person name="Minami C."/>
            <person name="Fujishiro T."/>
            <person name="Kohara M."/>
            <person name="Katoh M."/>
            <person name="Nakazaki N."/>
            <person name="Nakayama S."/>
            <person name="Yamada M."/>
            <person name="Tabata S."/>
            <person name="Watanabe M.M."/>
        </authorList>
    </citation>
    <scope>NUCLEOTIDE SEQUENCE [LARGE SCALE GENOMIC DNA]</scope>
    <source>
        <strain>NIES-843 / IAM M-247</strain>
    </source>
</reference>
<dbReference type="EC" id="1.7.1.13" evidence="1"/>
<dbReference type="EMBL" id="AP009552">
    <property type="protein sequence ID" value="BAG03653.1"/>
    <property type="molecule type" value="Genomic_DNA"/>
</dbReference>
<dbReference type="RefSeq" id="WP_002740916.1">
    <property type="nucleotide sequence ID" value="NC_010296.1"/>
</dbReference>
<dbReference type="SMR" id="B0JPS9"/>
<dbReference type="STRING" id="449447.MAE_38310"/>
<dbReference type="PaxDb" id="449447-MAE_38310"/>
<dbReference type="EnsemblBacteria" id="BAG03653">
    <property type="protein sequence ID" value="BAG03653"/>
    <property type="gene ID" value="MAE_38310"/>
</dbReference>
<dbReference type="KEGG" id="mar:MAE_38310"/>
<dbReference type="eggNOG" id="COG0780">
    <property type="taxonomic scope" value="Bacteria"/>
</dbReference>
<dbReference type="HOGENOM" id="CLU_102489_1_1_3"/>
<dbReference type="BioCyc" id="MAER449447:MAE_RS16550-MONOMER"/>
<dbReference type="UniPathway" id="UPA00392"/>
<dbReference type="Proteomes" id="UP000001510">
    <property type="component" value="Chromosome"/>
</dbReference>
<dbReference type="GO" id="GO:0005737">
    <property type="term" value="C:cytoplasm"/>
    <property type="evidence" value="ECO:0007669"/>
    <property type="project" value="UniProtKB-SubCell"/>
</dbReference>
<dbReference type="GO" id="GO:0033739">
    <property type="term" value="F:preQ1 synthase activity"/>
    <property type="evidence" value="ECO:0007669"/>
    <property type="project" value="UniProtKB-UniRule"/>
</dbReference>
<dbReference type="GO" id="GO:0008616">
    <property type="term" value="P:queuosine biosynthetic process"/>
    <property type="evidence" value="ECO:0007669"/>
    <property type="project" value="UniProtKB-UniRule"/>
</dbReference>
<dbReference type="GO" id="GO:0006400">
    <property type="term" value="P:tRNA modification"/>
    <property type="evidence" value="ECO:0007669"/>
    <property type="project" value="UniProtKB-UniRule"/>
</dbReference>
<dbReference type="Gene3D" id="3.30.1130.10">
    <property type="match status" value="1"/>
</dbReference>
<dbReference type="HAMAP" id="MF_00818">
    <property type="entry name" value="QueF_type1"/>
    <property type="match status" value="1"/>
</dbReference>
<dbReference type="InterPro" id="IPR043133">
    <property type="entry name" value="GTP-CH-I_C/QueF"/>
</dbReference>
<dbReference type="InterPro" id="IPR050084">
    <property type="entry name" value="NADPH_dep_7-cyano-7-deazaG_red"/>
</dbReference>
<dbReference type="InterPro" id="IPR029500">
    <property type="entry name" value="QueF"/>
</dbReference>
<dbReference type="InterPro" id="IPR016856">
    <property type="entry name" value="QueF_type1"/>
</dbReference>
<dbReference type="NCBIfam" id="TIGR03139">
    <property type="entry name" value="QueF-II"/>
    <property type="match status" value="1"/>
</dbReference>
<dbReference type="PANTHER" id="PTHR34354">
    <property type="entry name" value="NADPH-DEPENDENT 7-CYANO-7-DEAZAGUANINE REDUCTASE"/>
    <property type="match status" value="1"/>
</dbReference>
<dbReference type="PANTHER" id="PTHR34354:SF1">
    <property type="entry name" value="NADPH-DEPENDENT 7-CYANO-7-DEAZAGUANINE REDUCTASE"/>
    <property type="match status" value="1"/>
</dbReference>
<dbReference type="Pfam" id="PF14489">
    <property type="entry name" value="QueF"/>
    <property type="match status" value="1"/>
</dbReference>
<dbReference type="PIRSF" id="PIRSF027377">
    <property type="entry name" value="Nitrile_oxidored_QueF"/>
    <property type="match status" value="1"/>
</dbReference>
<dbReference type="SUPFAM" id="SSF55620">
    <property type="entry name" value="Tetrahydrobiopterin biosynthesis enzymes-like"/>
    <property type="match status" value="1"/>
</dbReference>
<feature type="chain" id="PRO_1000083837" description="NADPH-dependent 7-cyano-7-deazaguanine reductase">
    <location>
        <begin position="1"/>
        <end position="131"/>
    </location>
</feature>
<feature type="active site" description="Thioimide intermediate" evidence="1">
    <location>
        <position position="47"/>
    </location>
</feature>
<feature type="active site" description="Proton donor" evidence="1">
    <location>
        <position position="54"/>
    </location>
</feature>
<feature type="binding site" evidence="1">
    <location>
        <begin position="69"/>
        <end position="71"/>
    </location>
    <ligand>
        <name>substrate</name>
    </ligand>
</feature>
<feature type="binding site" evidence="1">
    <location>
        <begin position="88"/>
        <end position="89"/>
    </location>
    <ligand>
        <name>substrate</name>
    </ligand>
</feature>
<gene>
    <name evidence="1" type="primary">queF</name>
    <name type="ordered locus">MAE_38310</name>
</gene>
<comment type="function">
    <text evidence="1">Catalyzes the NADPH-dependent reduction of 7-cyano-7-deazaguanine (preQ0) to 7-aminomethyl-7-deazaguanine (preQ1).</text>
</comment>
<comment type="catalytic activity">
    <reaction evidence="1">
        <text>7-aminomethyl-7-carbaguanine + 2 NADP(+) = 7-cyano-7-deazaguanine + 2 NADPH + 3 H(+)</text>
        <dbReference type="Rhea" id="RHEA:13409"/>
        <dbReference type="ChEBI" id="CHEBI:15378"/>
        <dbReference type="ChEBI" id="CHEBI:45075"/>
        <dbReference type="ChEBI" id="CHEBI:57783"/>
        <dbReference type="ChEBI" id="CHEBI:58349"/>
        <dbReference type="ChEBI" id="CHEBI:58703"/>
        <dbReference type="EC" id="1.7.1.13"/>
    </reaction>
</comment>
<comment type="pathway">
    <text evidence="1">tRNA modification; tRNA-queuosine biosynthesis.</text>
</comment>
<comment type="subcellular location">
    <subcellularLocation>
        <location evidence="1">Cytoplasm</location>
    </subcellularLocation>
</comment>
<comment type="similarity">
    <text evidence="1">Belongs to the GTP cyclohydrolase I family. QueF type 1 subfamily.</text>
</comment>
<organism>
    <name type="scientific">Microcystis aeruginosa (strain NIES-843 / IAM M-2473)</name>
    <dbReference type="NCBI Taxonomy" id="449447"/>
    <lineage>
        <taxon>Bacteria</taxon>
        <taxon>Bacillati</taxon>
        <taxon>Cyanobacteriota</taxon>
        <taxon>Cyanophyceae</taxon>
        <taxon>Oscillatoriophycideae</taxon>
        <taxon>Chroococcales</taxon>
        <taxon>Microcystaceae</taxon>
        <taxon>Microcystis</taxon>
    </lineage>
</organism>
<name>QUEF_MICAN</name>
<accession>B0JPS9</accession>
<keyword id="KW-0963">Cytoplasm</keyword>
<keyword id="KW-0521">NADP</keyword>
<keyword id="KW-0560">Oxidoreductase</keyword>
<keyword id="KW-0671">Queuosine biosynthesis</keyword>
<evidence type="ECO:0000255" key="1">
    <source>
        <dbReference type="HAMAP-Rule" id="MF_00818"/>
    </source>
</evidence>
<protein>
    <recommendedName>
        <fullName evidence="1">NADPH-dependent 7-cyano-7-deazaguanine reductase</fullName>
        <ecNumber evidence="1">1.7.1.13</ecNumber>
    </recommendedName>
    <alternativeName>
        <fullName evidence="1">7-cyano-7-carbaguanine reductase</fullName>
    </alternativeName>
    <alternativeName>
        <fullName evidence="1">NADPH-dependent nitrile oxidoreductase</fullName>
    </alternativeName>
    <alternativeName>
        <fullName evidence="1">PreQ(0) reductase</fullName>
    </alternativeName>
</protein>
<proteinExistence type="inferred from homology"/>